<proteinExistence type="inferred from homology"/>
<feature type="chain" id="PRO_0000188459" description="Glycerol-3-phosphate acyltransferase">
    <location>
        <begin position="1"/>
        <end position="207"/>
    </location>
</feature>
<feature type="transmembrane region" description="Helical" evidence="1">
    <location>
        <begin position="1"/>
        <end position="21"/>
    </location>
</feature>
<feature type="transmembrane region" description="Helical" evidence="1">
    <location>
        <begin position="42"/>
        <end position="62"/>
    </location>
</feature>
<feature type="transmembrane region" description="Helical" evidence="1">
    <location>
        <begin position="65"/>
        <end position="85"/>
    </location>
</feature>
<feature type="transmembrane region" description="Helical" evidence="1">
    <location>
        <begin position="105"/>
        <end position="125"/>
    </location>
</feature>
<feature type="transmembrane region" description="Helical" evidence="1">
    <location>
        <begin position="138"/>
        <end position="158"/>
    </location>
</feature>
<feature type="transmembrane region" description="Helical" evidence="1">
    <location>
        <begin position="159"/>
        <end position="179"/>
    </location>
</feature>
<reference key="1">
    <citation type="journal article" date="2005" name="Proc. Natl. Acad. Sci. U.S.A.">
        <title>Genome analysis of multiple pathogenic isolates of Streptococcus agalactiae: implications for the microbial 'pan-genome'.</title>
        <authorList>
            <person name="Tettelin H."/>
            <person name="Masignani V."/>
            <person name="Cieslewicz M.J."/>
            <person name="Donati C."/>
            <person name="Medini D."/>
            <person name="Ward N.L."/>
            <person name="Angiuoli S.V."/>
            <person name="Crabtree J."/>
            <person name="Jones A.L."/>
            <person name="Durkin A.S."/>
            <person name="DeBoy R.T."/>
            <person name="Davidsen T.M."/>
            <person name="Mora M."/>
            <person name="Scarselli M."/>
            <person name="Margarit y Ros I."/>
            <person name="Peterson J.D."/>
            <person name="Hauser C.R."/>
            <person name="Sundaram J.P."/>
            <person name="Nelson W.C."/>
            <person name="Madupu R."/>
            <person name="Brinkac L.M."/>
            <person name="Dodson R.J."/>
            <person name="Rosovitz M.J."/>
            <person name="Sullivan S.A."/>
            <person name="Daugherty S.C."/>
            <person name="Haft D.H."/>
            <person name="Selengut J."/>
            <person name="Gwinn M.L."/>
            <person name="Zhou L."/>
            <person name="Zafar N."/>
            <person name="Khouri H."/>
            <person name="Radune D."/>
            <person name="Dimitrov G."/>
            <person name="Watkins K."/>
            <person name="O'Connor K.J."/>
            <person name="Smith S."/>
            <person name="Utterback T.R."/>
            <person name="White O."/>
            <person name="Rubens C.E."/>
            <person name="Grandi G."/>
            <person name="Madoff L.C."/>
            <person name="Kasper D.L."/>
            <person name="Telford J.L."/>
            <person name="Wessels M.R."/>
            <person name="Rappuoli R."/>
            <person name="Fraser C.M."/>
        </authorList>
    </citation>
    <scope>NUCLEOTIDE SEQUENCE [LARGE SCALE GENOMIC DNA]</scope>
    <source>
        <strain>ATCC 27591 / A909 / CDC SS700</strain>
    </source>
</reference>
<dbReference type="EC" id="2.3.1.275" evidence="1"/>
<dbReference type="EMBL" id="CP000114">
    <property type="protein sequence ID" value="ABA45851.1"/>
    <property type="molecule type" value="Genomic_DNA"/>
</dbReference>
<dbReference type="SMR" id="Q3K0U5"/>
<dbReference type="KEGG" id="sak:SAK_1244"/>
<dbReference type="HOGENOM" id="CLU_081254_4_0_9"/>
<dbReference type="UniPathway" id="UPA00085"/>
<dbReference type="GO" id="GO:0005886">
    <property type="term" value="C:plasma membrane"/>
    <property type="evidence" value="ECO:0007669"/>
    <property type="project" value="UniProtKB-SubCell"/>
</dbReference>
<dbReference type="GO" id="GO:0043772">
    <property type="term" value="F:acyl-phosphate glycerol-3-phosphate acyltransferase activity"/>
    <property type="evidence" value="ECO:0007669"/>
    <property type="project" value="UniProtKB-UniRule"/>
</dbReference>
<dbReference type="GO" id="GO:0008654">
    <property type="term" value="P:phospholipid biosynthetic process"/>
    <property type="evidence" value="ECO:0007669"/>
    <property type="project" value="UniProtKB-UniRule"/>
</dbReference>
<dbReference type="HAMAP" id="MF_01043">
    <property type="entry name" value="PlsY"/>
    <property type="match status" value="1"/>
</dbReference>
<dbReference type="InterPro" id="IPR003811">
    <property type="entry name" value="G3P_acylTferase_PlsY"/>
</dbReference>
<dbReference type="NCBIfam" id="TIGR00023">
    <property type="entry name" value="glycerol-3-phosphate 1-O-acyltransferase PlsY"/>
    <property type="match status" value="1"/>
</dbReference>
<dbReference type="PANTHER" id="PTHR30309:SF0">
    <property type="entry name" value="GLYCEROL-3-PHOSPHATE ACYLTRANSFERASE-RELATED"/>
    <property type="match status" value="1"/>
</dbReference>
<dbReference type="PANTHER" id="PTHR30309">
    <property type="entry name" value="INNER MEMBRANE PROTEIN YGIH"/>
    <property type="match status" value="1"/>
</dbReference>
<dbReference type="Pfam" id="PF02660">
    <property type="entry name" value="G3P_acyltransf"/>
    <property type="match status" value="1"/>
</dbReference>
<dbReference type="SMART" id="SM01207">
    <property type="entry name" value="G3P_acyltransf"/>
    <property type="match status" value="1"/>
</dbReference>
<comment type="function">
    <text evidence="1">Catalyzes the transfer of an acyl group from acyl-phosphate (acyl-PO(4)) to glycerol-3-phosphate (G3P) to form lysophosphatidic acid (LPA). This enzyme utilizes acyl-phosphate as fatty acyl donor, but not acyl-CoA or acyl-ACP.</text>
</comment>
<comment type="catalytic activity">
    <reaction evidence="1">
        <text>an acyl phosphate + sn-glycerol 3-phosphate = a 1-acyl-sn-glycero-3-phosphate + phosphate</text>
        <dbReference type="Rhea" id="RHEA:34075"/>
        <dbReference type="ChEBI" id="CHEBI:43474"/>
        <dbReference type="ChEBI" id="CHEBI:57597"/>
        <dbReference type="ChEBI" id="CHEBI:57970"/>
        <dbReference type="ChEBI" id="CHEBI:59918"/>
        <dbReference type="EC" id="2.3.1.275"/>
    </reaction>
</comment>
<comment type="pathway">
    <text evidence="1">Lipid metabolism; phospholipid metabolism.</text>
</comment>
<comment type="subunit">
    <text evidence="1">Probably interacts with PlsX.</text>
</comment>
<comment type="subcellular location">
    <subcellularLocation>
        <location evidence="1">Cell membrane</location>
        <topology evidence="1">Multi-pass membrane protein</topology>
    </subcellularLocation>
</comment>
<comment type="similarity">
    <text evidence="1">Belongs to the PlsY family.</text>
</comment>
<gene>
    <name evidence="1" type="primary">plsY</name>
    <name type="ordered locus">SAK_1244</name>
</gene>
<accession>Q3K0U5</accession>
<keyword id="KW-1003">Cell membrane</keyword>
<keyword id="KW-0444">Lipid biosynthesis</keyword>
<keyword id="KW-0443">Lipid metabolism</keyword>
<keyword id="KW-0472">Membrane</keyword>
<keyword id="KW-0594">Phospholipid biosynthesis</keyword>
<keyword id="KW-1208">Phospholipid metabolism</keyword>
<keyword id="KW-0808">Transferase</keyword>
<keyword id="KW-0812">Transmembrane</keyword>
<keyword id="KW-1133">Transmembrane helix</keyword>
<name>PLSY_STRA1</name>
<evidence type="ECO:0000255" key="1">
    <source>
        <dbReference type="HAMAP-Rule" id="MF_01043"/>
    </source>
</evidence>
<protein>
    <recommendedName>
        <fullName evidence="1">Glycerol-3-phosphate acyltransferase</fullName>
    </recommendedName>
    <alternativeName>
        <fullName evidence="1">Acyl-PO4 G3P acyltransferase</fullName>
    </alternativeName>
    <alternativeName>
        <fullName evidence="1">Acyl-phosphate--glycerol-3-phosphate acyltransferase</fullName>
    </alternativeName>
    <alternativeName>
        <fullName evidence="1">G3P acyltransferase</fullName>
        <shortName evidence="1">GPAT</shortName>
        <ecNumber evidence="1">2.3.1.275</ecNumber>
    </alternativeName>
    <alternativeName>
        <fullName evidence="1">Lysophosphatidic acid synthase</fullName>
        <shortName evidence="1">LPA synthase</shortName>
    </alternativeName>
</protein>
<organism>
    <name type="scientific">Streptococcus agalactiae serotype Ia (strain ATCC 27591 / A909 / CDC SS700)</name>
    <dbReference type="NCBI Taxonomy" id="205921"/>
    <lineage>
        <taxon>Bacteria</taxon>
        <taxon>Bacillati</taxon>
        <taxon>Bacillota</taxon>
        <taxon>Bacilli</taxon>
        <taxon>Lactobacillales</taxon>
        <taxon>Streptococcaceae</taxon>
        <taxon>Streptococcus</taxon>
    </lineage>
</organism>
<sequence length="207" mass="22832">MIIIAYLLGSIQTGLWIGKYFYQVNLRQHGSGNTGTTNTFRILGVKAGIVTLTIDILKGTLATLIPIILGITTISPFFIGFFAIIGHTFPIFAQFKGGKAVATSAGVLLGFAPSFFLYLLVIFLLTLYLFSMISLSSITVAVVGILSVLIFPLVGFILTDYDWIFTTVVILMALTIIIRHQDNIKRIRKRQENLVPFGLNLSKQKNK</sequence>